<gene>
    <name type="primary">jhdm-1</name>
    <name type="ORF">T26A5.5</name>
</gene>
<feature type="chain" id="PRO_0000226789" description="JmjC domain-containing histone demethylation protein 1">
    <location>
        <begin position="1"/>
        <end position="1076"/>
    </location>
</feature>
<feature type="domain" description="JmjC" evidence="3">
    <location>
        <begin position="93"/>
        <end position="265"/>
    </location>
</feature>
<feature type="region of interest" description="Disordered" evidence="4">
    <location>
        <begin position="598"/>
        <end position="748"/>
    </location>
</feature>
<feature type="region of interest" description="Disordered" evidence="4">
    <location>
        <begin position="789"/>
        <end position="1056"/>
    </location>
</feature>
<feature type="compositionally biased region" description="Acidic residues" evidence="4">
    <location>
        <begin position="610"/>
        <end position="634"/>
    </location>
</feature>
<feature type="compositionally biased region" description="Basic and acidic residues" evidence="4">
    <location>
        <begin position="653"/>
        <end position="680"/>
    </location>
</feature>
<feature type="compositionally biased region" description="Basic residues" evidence="4">
    <location>
        <begin position="681"/>
        <end position="698"/>
    </location>
</feature>
<feature type="compositionally biased region" description="Basic and acidic residues" evidence="4">
    <location>
        <begin position="699"/>
        <end position="714"/>
    </location>
</feature>
<feature type="compositionally biased region" description="Basic and acidic residues" evidence="4">
    <location>
        <begin position="789"/>
        <end position="811"/>
    </location>
</feature>
<feature type="compositionally biased region" description="Low complexity" evidence="4">
    <location>
        <begin position="935"/>
        <end position="946"/>
    </location>
</feature>
<feature type="compositionally biased region" description="Polar residues" evidence="4">
    <location>
        <begin position="957"/>
        <end position="990"/>
    </location>
</feature>
<feature type="compositionally biased region" description="Polar residues" evidence="4">
    <location>
        <begin position="1004"/>
        <end position="1019"/>
    </location>
</feature>
<feature type="compositionally biased region" description="Basic and acidic residues" evidence="4">
    <location>
        <begin position="1044"/>
        <end position="1056"/>
    </location>
</feature>
<feature type="binding site" evidence="1">
    <location>
        <position position="159"/>
    </location>
    <ligand>
        <name>substrate</name>
    </ligand>
</feature>
<feature type="binding site" evidence="3">
    <location>
        <position position="162"/>
    </location>
    <ligand>
        <name>Fe cation</name>
        <dbReference type="ChEBI" id="CHEBI:24875"/>
        <note>catalytic</note>
    </ligand>
</feature>
<feature type="binding site" evidence="3">
    <location>
        <position position="164"/>
    </location>
    <ligand>
        <name>Fe cation</name>
        <dbReference type="ChEBI" id="CHEBI:24875"/>
        <note>catalytic</note>
    </ligand>
</feature>
<feature type="binding site" evidence="1">
    <location>
        <position position="179"/>
    </location>
    <ligand>
        <name>substrate</name>
    </ligand>
</feature>
<feature type="binding site" evidence="3">
    <location>
        <position position="233"/>
    </location>
    <ligand>
        <name>Fe cation</name>
        <dbReference type="ChEBI" id="CHEBI:24875"/>
        <note>catalytic</note>
    </ligand>
</feature>
<feature type="splice variant" id="VSP_017481" description="In isoform b." evidence="6">
    <original>TG</original>
    <variation>PN</variation>
    <location>
        <begin position="504"/>
        <end position="505"/>
    </location>
</feature>
<feature type="splice variant" id="VSP_017482" description="In isoform b." evidence="6">
    <location>
        <begin position="506"/>
        <end position="1076"/>
    </location>
</feature>
<comment type="function">
    <text evidence="2 5">Histone demethylase that specifically demethylates 'Lys-36' of histone H3, thereby playing a central role in histone code (By similarity). Has a role in regulating lifespan.</text>
</comment>
<comment type="catalytic activity">
    <reaction evidence="2">
        <text>N(6),N(6)-dimethyl-L-lysyl(36)-[histone H3] + 2 2-oxoglutarate + 2 O2 = L-lysyl(36)-[histone H3] + 2 formaldehyde + 2 succinate + 2 CO2</text>
        <dbReference type="Rhea" id="RHEA:42032"/>
        <dbReference type="Rhea" id="RHEA-COMP:9785"/>
        <dbReference type="Rhea" id="RHEA-COMP:9787"/>
        <dbReference type="ChEBI" id="CHEBI:15379"/>
        <dbReference type="ChEBI" id="CHEBI:16526"/>
        <dbReference type="ChEBI" id="CHEBI:16810"/>
        <dbReference type="ChEBI" id="CHEBI:16842"/>
        <dbReference type="ChEBI" id="CHEBI:29969"/>
        <dbReference type="ChEBI" id="CHEBI:30031"/>
        <dbReference type="ChEBI" id="CHEBI:61976"/>
        <dbReference type="EC" id="1.14.11.27"/>
    </reaction>
</comment>
<comment type="cofactor">
    <cofactor evidence="1">
        <name>Fe(2+)</name>
        <dbReference type="ChEBI" id="CHEBI:29033"/>
    </cofactor>
    <text evidence="1">Binds 1 Fe(2+) ion per subunit.</text>
</comment>
<comment type="subcellular location">
    <subcellularLocation>
        <location evidence="1">Nucleus</location>
    </subcellularLocation>
</comment>
<comment type="alternative products">
    <event type="alternative splicing"/>
    <isoform>
        <id>Q95Q98-1</id>
        <name>a</name>
        <sequence type="displayed"/>
    </isoform>
    <isoform>
        <id>Q95Q98-2</id>
        <name>b</name>
        <sequence type="described" ref="VSP_017481 VSP_017482"/>
    </isoform>
</comment>
<comment type="domain">
    <text evidence="1">The JmjC domain mediates the demethylation activity.</text>
</comment>
<comment type="disruption phenotype">
    <text evidence="5">RNAi-mediated knockdown introduced at L1 and young adult stages increases lifespan by 12% and 15% respectively.</text>
</comment>
<comment type="similarity">
    <text evidence="6">Belongs to the JHDM1 histone demethylase family.</text>
</comment>
<evidence type="ECO:0000250" key="1"/>
<evidence type="ECO:0000250" key="2">
    <source>
        <dbReference type="UniProtKB" id="P40034"/>
    </source>
</evidence>
<evidence type="ECO:0000255" key="3">
    <source>
        <dbReference type="PROSITE-ProRule" id="PRU00538"/>
    </source>
</evidence>
<evidence type="ECO:0000256" key="4">
    <source>
        <dbReference type="SAM" id="MobiDB-lite"/>
    </source>
</evidence>
<evidence type="ECO:0000269" key="5">
    <source>
    </source>
</evidence>
<evidence type="ECO:0000305" key="6"/>
<proteinExistence type="inferred from homology"/>
<reference key="1">
    <citation type="journal article" date="1998" name="Science">
        <title>Genome sequence of the nematode C. elegans: a platform for investigating biology.</title>
        <authorList>
            <consortium name="The C. elegans sequencing consortium"/>
        </authorList>
    </citation>
    <scope>NUCLEOTIDE SEQUENCE [LARGE SCALE GENOMIC DNA]</scope>
    <scope>ALTERNATIVE SPLICING</scope>
    <source>
        <strain>Bristol N2</strain>
    </source>
</reference>
<reference key="2">
    <citation type="journal article" date="2011" name="Aging Cell">
        <title>The H3K27 demethylase UTX-1 regulates C. elegans lifespan in a germline-independent, insulin-dependent manner.</title>
        <authorList>
            <person name="Maures T.J."/>
            <person name="Greer E.L."/>
            <person name="Hauswirth A.G."/>
            <person name="Brunet A."/>
        </authorList>
    </citation>
    <scope>FUNCTION</scope>
    <scope>DISRUPTION PHENOTYPE</scope>
</reference>
<organism>
    <name type="scientific">Caenorhabditis elegans</name>
    <dbReference type="NCBI Taxonomy" id="6239"/>
    <lineage>
        <taxon>Eukaryota</taxon>
        <taxon>Metazoa</taxon>
        <taxon>Ecdysozoa</taxon>
        <taxon>Nematoda</taxon>
        <taxon>Chromadorea</taxon>
        <taxon>Rhabditida</taxon>
        <taxon>Rhabditina</taxon>
        <taxon>Rhabditomorpha</taxon>
        <taxon>Rhabditoidea</taxon>
        <taxon>Rhabditidae</taxon>
        <taxon>Peloderinae</taxon>
        <taxon>Caenorhabditis</taxon>
    </lineage>
</organism>
<protein>
    <recommendedName>
        <fullName>JmjC domain-containing histone demethylation protein 1</fullName>
        <ecNumber evidence="2">1.14.11.27</ecNumber>
    </recommendedName>
    <alternativeName>
        <fullName>[Histone-H3]-lysine-36 demethylase 1</fullName>
    </alternativeName>
</protein>
<sequence length="1076" mass="123434">MDPEALNLEFYDKNGLDNPIHFRCDPKRIGMTLPSPDFSVDDVLELVGGNRMIEVVQVQNQGSVKMSLQEFINFYKTPQEKREVLYNVLSLEFSQTPLEDLVKSPELVRQIDWVGNQWPDALRQRWISFNGRDKKFYNPHHTFPKVQNYCLMSVANCYTDFHIDFSGTSVWYHVLKGRKVFWLIPPTETNFFIYQEFIKTVNDNAFFGKSVEKCHVAILEPGDTMLIPSGWIHAVYTPDDSLVFGGNFLHSQSCKTQLRVYQVENKLNITRKFRLPYNEELIFYVIADYVKQWTGREYVRPLRIEDAKYDYVGDKWKTAGGHHKKIEYSDYETGVELTNDMIKGDEESTKDEVKVIAMHAENSLFGYPMVSKATFSADTGLEEEADEDEVKYQETKEEMDARRDAEIDELANSNSLIFYKNRTHDFVRNKCVPDHKLPIGHEPPIYFNDDEISRISPRLLDELETLGTYIRRKARVEVAEGICQPASLINTFQTVLKKRRSELTGKKFEFNQIMPRRYTRSTMETGEYDFQPTQEVPQESARRSTRFKVDNFPDELLESEVTDKPIILPQQPSSGPLEYLPAPKDEIKEDINGFEEEFEEEYEGIGQRDDQEEEEYDAEEPEDQEEEEEDEYQAEEYTPTPVTRRSSSRRSGAKNDESEEVSVKKDKKEKMEKVEKDEKRRNSKSKKDKISKEKKKKERERIELESQLDAELRAAHGGGSSKSKKKKPEKPAFVGGLPTSSIQIDPVVSNPYNYDPRMEMMKLGTGQLKSAYRKTKNNVELHIEKNLYKIEPKRGSEEGSQSREQSMEPEHSTPVFTTFDDINEANNDHYDGQKPPTKRAKYEAISVDTYETPSSSRNKEHKEYRPSPNAAPTPSPSHHQKPKLSSPAMVSSTNEYQLRKHMSSERRSSDAGSAMKKGVYMPAMSRQDKMIAEGASAPSSRHSSISSERRPSFIPDFNSSRNSSIDTPYTPTTVTPSRSSWLPNTSSINRHSIEDDSPIDVVNDSLSPINIASSPTYPTAITPPPVTLSDLKKDMSNGRKSHSQHHDDGHKHKIPSKEAIAELKLLVGKLKAINDS</sequence>
<keyword id="KW-0025">Alternative splicing</keyword>
<keyword id="KW-0156">Chromatin regulator</keyword>
<keyword id="KW-0223">Dioxygenase</keyword>
<keyword id="KW-0408">Iron</keyword>
<keyword id="KW-0479">Metal-binding</keyword>
<keyword id="KW-0539">Nucleus</keyword>
<keyword id="KW-0560">Oxidoreductase</keyword>
<keyword id="KW-1185">Reference proteome</keyword>
<keyword id="KW-0804">Transcription</keyword>
<keyword id="KW-0805">Transcription regulation</keyword>
<dbReference type="EC" id="1.14.11.27" evidence="2"/>
<dbReference type="EMBL" id="FO080366">
    <property type="protein sequence ID" value="CCD63210.1"/>
    <property type="molecule type" value="Genomic_DNA"/>
</dbReference>
<dbReference type="EMBL" id="FO080366">
    <property type="protein sequence ID" value="CCD63211.1"/>
    <property type="molecule type" value="Genomic_DNA"/>
</dbReference>
<dbReference type="RefSeq" id="NP_498418.3">
    <property type="nucleotide sequence ID" value="NM_066017.6"/>
</dbReference>
<dbReference type="RefSeq" id="NP_498419.3">
    <property type="nucleotide sequence ID" value="NM_066018.9"/>
</dbReference>
<dbReference type="SMR" id="Q95Q98"/>
<dbReference type="BioGRID" id="41137">
    <property type="interactions" value="3"/>
</dbReference>
<dbReference type="FunCoup" id="Q95Q98">
    <property type="interactions" value="583"/>
</dbReference>
<dbReference type="STRING" id="6239.T26A5.5a.1"/>
<dbReference type="iPTMnet" id="Q95Q98"/>
<dbReference type="PaxDb" id="6239-T26A5.5a"/>
<dbReference type="PeptideAtlas" id="Q95Q98"/>
<dbReference type="EnsemblMetazoa" id="T26A5.5a.1">
    <property type="protein sequence ID" value="T26A5.5a.1"/>
    <property type="gene ID" value="WBGene00020821"/>
</dbReference>
<dbReference type="EnsemblMetazoa" id="T26A5.5b.1">
    <property type="protein sequence ID" value="T26A5.5b.1"/>
    <property type="gene ID" value="WBGene00020821"/>
</dbReference>
<dbReference type="GeneID" id="175919"/>
<dbReference type="KEGG" id="cel:CELE_T26A5.5"/>
<dbReference type="UCSC" id="T26A5.5b">
    <molecule id="Q95Q98-1"/>
    <property type="organism name" value="c. elegans"/>
</dbReference>
<dbReference type="AGR" id="WB:WBGene00020821"/>
<dbReference type="CTD" id="175919"/>
<dbReference type="WormBase" id="T26A5.5a">
    <property type="protein sequence ID" value="CE50209"/>
    <property type="gene ID" value="WBGene00020821"/>
    <property type="gene designation" value="jhdm-1"/>
</dbReference>
<dbReference type="WormBase" id="T26A5.5b">
    <property type="protein sequence ID" value="CE50262"/>
    <property type="gene ID" value="WBGene00020821"/>
    <property type="gene designation" value="jhdm-1"/>
</dbReference>
<dbReference type="eggNOG" id="KOG1633">
    <property type="taxonomic scope" value="Eukaryota"/>
</dbReference>
<dbReference type="GeneTree" id="ENSGT00940000167551"/>
<dbReference type="HOGENOM" id="CLU_286864_0_0_1"/>
<dbReference type="InParanoid" id="Q95Q98"/>
<dbReference type="OrthoDB" id="5876800at2759"/>
<dbReference type="Reactome" id="R-CEL-3214842">
    <property type="pathway name" value="HDMs demethylate histones"/>
</dbReference>
<dbReference type="PRO" id="PR:Q95Q98"/>
<dbReference type="Proteomes" id="UP000001940">
    <property type="component" value="Chromosome III"/>
</dbReference>
<dbReference type="Bgee" id="WBGene00020821">
    <property type="expression patterns" value="Expressed in embryo and 4 other cell types or tissues"/>
</dbReference>
<dbReference type="ExpressionAtlas" id="Q95Q98">
    <property type="expression patterns" value="baseline and differential"/>
</dbReference>
<dbReference type="GO" id="GO:0005634">
    <property type="term" value="C:nucleus"/>
    <property type="evidence" value="ECO:0007669"/>
    <property type="project" value="UniProtKB-SubCell"/>
</dbReference>
<dbReference type="GO" id="GO:0032452">
    <property type="term" value="F:histone demethylase activity"/>
    <property type="evidence" value="ECO:0000318"/>
    <property type="project" value="GO_Central"/>
</dbReference>
<dbReference type="GO" id="GO:0140680">
    <property type="term" value="F:histone H3K36me/H3K36me2 demethylase activity"/>
    <property type="evidence" value="ECO:0007669"/>
    <property type="project" value="UniProtKB-EC"/>
</dbReference>
<dbReference type="GO" id="GO:0046872">
    <property type="term" value="F:metal ion binding"/>
    <property type="evidence" value="ECO:0007669"/>
    <property type="project" value="UniProtKB-KW"/>
</dbReference>
<dbReference type="GO" id="GO:0003712">
    <property type="term" value="F:transcription coregulator activity"/>
    <property type="evidence" value="ECO:0000318"/>
    <property type="project" value="GO_Central"/>
</dbReference>
<dbReference type="GO" id="GO:0006338">
    <property type="term" value="P:chromatin remodeling"/>
    <property type="evidence" value="ECO:0000318"/>
    <property type="project" value="GO_Central"/>
</dbReference>
<dbReference type="GO" id="GO:0006357">
    <property type="term" value="P:regulation of transcription by RNA polymerase II"/>
    <property type="evidence" value="ECO:0000318"/>
    <property type="project" value="GO_Central"/>
</dbReference>
<dbReference type="Gene3D" id="2.60.120.650">
    <property type="entry name" value="Cupin"/>
    <property type="match status" value="1"/>
</dbReference>
<dbReference type="InterPro" id="IPR041667">
    <property type="entry name" value="Cupin_8"/>
</dbReference>
<dbReference type="InterPro" id="IPR050690">
    <property type="entry name" value="JHDM1_Histone_Demethylase"/>
</dbReference>
<dbReference type="InterPro" id="IPR003347">
    <property type="entry name" value="JmjC_dom"/>
</dbReference>
<dbReference type="PANTHER" id="PTHR23123">
    <property type="entry name" value="PHD/F-BOX CONTAINING PROTEIN"/>
    <property type="match status" value="1"/>
</dbReference>
<dbReference type="Pfam" id="PF13621">
    <property type="entry name" value="Cupin_8"/>
    <property type="match status" value="1"/>
</dbReference>
<dbReference type="SMART" id="SM00558">
    <property type="entry name" value="JmjC"/>
    <property type="match status" value="1"/>
</dbReference>
<dbReference type="SUPFAM" id="SSF51197">
    <property type="entry name" value="Clavaminate synthase-like"/>
    <property type="match status" value="1"/>
</dbReference>
<dbReference type="PROSITE" id="PS51184">
    <property type="entry name" value="JMJC"/>
    <property type="match status" value="1"/>
</dbReference>
<accession>Q95Q98</accession>
<accession>Q95Q99</accession>
<name>JHD1_CAEEL</name>